<evidence type="ECO:0000255" key="1">
    <source>
        <dbReference type="HAMAP-Rule" id="MF_00473"/>
    </source>
</evidence>
<proteinExistence type="inferred from homology"/>
<dbReference type="EC" id="5.3.1.9" evidence="1"/>
<dbReference type="EMBL" id="AM181176">
    <property type="protein sequence ID" value="CAY52336.1"/>
    <property type="molecule type" value="Genomic_DNA"/>
</dbReference>
<dbReference type="RefSeq" id="WP_015885909.1">
    <property type="nucleotide sequence ID" value="NC_012660.1"/>
</dbReference>
<dbReference type="SMR" id="C3K249"/>
<dbReference type="STRING" id="294.SRM1_04859"/>
<dbReference type="GeneID" id="93466872"/>
<dbReference type="PATRIC" id="fig|216595.4.peg.5375"/>
<dbReference type="eggNOG" id="COG0166">
    <property type="taxonomic scope" value="Bacteria"/>
</dbReference>
<dbReference type="HOGENOM" id="CLU_017947_3_1_6"/>
<dbReference type="OrthoDB" id="140919at2"/>
<dbReference type="UniPathway" id="UPA00109">
    <property type="reaction ID" value="UER00181"/>
</dbReference>
<dbReference type="UniPathway" id="UPA00138"/>
<dbReference type="GO" id="GO:0005829">
    <property type="term" value="C:cytosol"/>
    <property type="evidence" value="ECO:0007669"/>
    <property type="project" value="TreeGrafter"/>
</dbReference>
<dbReference type="GO" id="GO:0097367">
    <property type="term" value="F:carbohydrate derivative binding"/>
    <property type="evidence" value="ECO:0007669"/>
    <property type="project" value="InterPro"/>
</dbReference>
<dbReference type="GO" id="GO:0004347">
    <property type="term" value="F:glucose-6-phosphate isomerase activity"/>
    <property type="evidence" value="ECO:0007669"/>
    <property type="project" value="UniProtKB-UniRule"/>
</dbReference>
<dbReference type="GO" id="GO:0048029">
    <property type="term" value="F:monosaccharide binding"/>
    <property type="evidence" value="ECO:0007669"/>
    <property type="project" value="TreeGrafter"/>
</dbReference>
<dbReference type="GO" id="GO:0006094">
    <property type="term" value="P:gluconeogenesis"/>
    <property type="evidence" value="ECO:0007669"/>
    <property type="project" value="UniProtKB-UniRule"/>
</dbReference>
<dbReference type="GO" id="GO:0051156">
    <property type="term" value="P:glucose 6-phosphate metabolic process"/>
    <property type="evidence" value="ECO:0007669"/>
    <property type="project" value="TreeGrafter"/>
</dbReference>
<dbReference type="GO" id="GO:0006096">
    <property type="term" value="P:glycolytic process"/>
    <property type="evidence" value="ECO:0007669"/>
    <property type="project" value="UniProtKB-UniRule"/>
</dbReference>
<dbReference type="CDD" id="cd05015">
    <property type="entry name" value="SIS_PGI_1"/>
    <property type="match status" value="1"/>
</dbReference>
<dbReference type="CDD" id="cd05016">
    <property type="entry name" value="SIS_PGI_2"/>
    <property type="match status" value="1"/>
</dbReference>
<dbReference type="FunFam" id="3.40.50.10490:FF:000018">
    <property type="entry name" value="Glucose-6-phosphate isomerase"/>
    <property type="match status" value="1"/>
</dbReference>
<dbReference type="Gene3D" id="1.10.1390.10">
    <property type="match status" value="1"/>
</dbReference>
<dbReference type="Gene3D" id="3.40.50.10490">
    <property type="entry name" value="Glucose-6-phosphate isomerase like protein, domain 1"/>
    <property type="match status" value="2"/>
</dbReference>
<dbReference type="HAMAP" id="MF_00473">
    <property type="entry name" value="G6P_isomerase"/>
    <property type="match status" value="1"/>
</dbReference>
<dbReference type="InterPro" id="IPR001672">
    <property type="entry name" value="G6P_Isomerase"/>
</dbReference>
<dbReference type="InterPro" id="IPR023096">
    <property type="entry name" value="G6P_Isomerase_C"/>
</dbReference>
<dbReference type="InterPro" id="IPR018189">
    <property type="entry name" value="Phosphoglucose_isomerase_CS"/>
</dbReference>
<dbReference type="InterPro" id="IPR046348">
    <property type="entry name" value="SIS_dom_sf"/>
</dbReference>
<dbReference type="InterPro" id="IPR035476">
    <property type="entry name" value="SIS_PGI_1"/>
</dbReference>
<dbReference type="InterPro" id="IPR035482">
    <property type="entry name" value="SIS_PGI_2"/>
</dbReference>
<dbReference type="NCBIfam" id="NF001211">
    <property type="entry name" value="PRK00179.1"/>
    <property type="match status" value="1"/>
</dbReference>
<dbReference type="PANTHER" id="PTHR11469">
    <property type="entry name" value="GLUCOSE-6-PHOSPHATE ISOMERASE"/>
    <property type="match status" value="1"/>
</dbReference>
<dbReference type="PANTHER" id="PTHR11469:SF1">
    <property type="entry name" value="GLUCOSE-6-PHOSPHATE ISOMERASE"/>
    <property type="match status" value="1"/>
</dbReference>
<dbReference type="Pfam" id="PF00342">
    <property type="entry name" value="PGI"/>
    <property type="match status" value="1"/>
</dbReference>
<dbReference type="PRINTS" id="PR00662">
    <property type="entry name" value="G6PISOMERASE"/>
</dbReference>
<dbReference type="SUPFAM" id="SSF53697">
    <property type="entry name" value="SIS domain"/>
    <property type="match status" value="1"/>
</dbReference>
<dbReference type="PROSITE" id="PS00765">
    <property type="entry name" value="P_GLUCOSE_ISOMERASE_1"/>
    <property type="match status" value="1"/>
</dbReference>
<dbReference type="PROSITE" id="PS00174">
    <property type="entry name" value="P_GLUCOSE_ISOMERASE_2"/>
    <property type="match status" value="1"/>
</dbReference>
<dbReference type="PROSITE" id="PS51463">
    <property type="entry name" value="P_GLUCOSE_ISOMERASE_3"/>
    <property type="match status" value="1"/>
</dbReference>
<comment type="function">
    <text evidence="1">Catalyzes the reversible isomerization of glucose-6-phosphate to fructose-6-phosphate.</text>
</comment>
<comment type="catalytic activity">
    <reaction evidence="1">
        <text>alpha-D-glucose 6-phosphate = beta-D-fructose 6-phosphate</text>
        <dbReference type="Rhea" id="RHEA:11816"/>
        <dbReference type="ChEBI" id="CHEBI:57634"/>
        <dbReference type="ChEBI" id="CHEBI:58225"/>
        <dbReference type="EC" id="5.3.1.9"/>
    </reaction>
</comment>
<comment type="pathway">
    <text evidence="1">Carbohydrate biosynthesis; gluconeogenesis.</text>
</comment>
<comment type="pathway">
    <text evidence="1">Carbohydrate degradation; glycolysis; D-glyceraldehyde 3-phosphate and glycerone phosphate from D-glucose: step 2/4.</text>
</comment>
<comment type="subcellular location">
    <subcellularLocation>
        <location evidence="1">Cytoplasm</location>
    </subcellularLocation>
</comment>
<comment type="similarity">
    <text evidence="1">Belongs to the GPI family.</text>
</comment>
<keyword id="KW-0963">Cytoplasm</keyword>
<keyword id="KW-0312">Gluconeogenesis</keyword>
<keyword id="KW-0324">Glycolysis</keyword>
<keyword id="KW-0413">Isomerase</keyword>
<organism>
    <name type="scientific">Pseudomonas fluorescens (strain SBW25)</name>
    <dbReference type="NCBI Taxonomy" id="216595"/>
    <lineage>
        <taxon>Bacteria</taxon>
        <taxon>Pseudomonadati</taxon>
        <taxon>Pseudomonadota</taxon>
        <taxon>Gammaproteobacteria</taxon>
        <taxon>Pseudomonadales</taxon>
        <taxon>Pseudomonadaceae</taxon>
        <taxon>Pseudomonas</taxon>
    </lineage>
</organism>
<name>G6PI_PSEFS</name>
<accession>C3K249</accession>
<protein>
    <recommendedName>
        <fullName evidence="1">Glucose-6-phosphate isomerase</fullName>
        <shortName evidence="1">GPI</shortName>
        <ecNumber evidence="1">5.3.1.9</ecNumber>
    </recommendedName>
    <alternativeName>
        <fullName evidence="1">Phosphoglucose isomerase</fullName>
        <shortName evidence="1">PGI</shortName>
    </alternativeName>
    <alternativeName>
        <fullName evidence="1">Phosphohexose isomerase</fullName>
        <shortName evidence="1">PHI</shortName>
    </alternativeName>
</protein>
<reference key="1">
    <citation type="journal article" date="2009" name="Genome Biol.">
        <title>Genomic and genetic analyses of diversity and plant interactions of Pseudomonas fluorescens.</title>
        <authorList>
            <person name="Silby M.W."/>
            <person name="Cerdeno-Tarraga A.M."/>
            <person name="Vernikos G.S."/>
            <person name="Giddens S.R."/>
            <person name="Jackson R.W."/>
            <person name="Preston G.M."/>
            <person name="Zhang X.-X."/>
            <person name="Moon C.D."/>
            <person name="Gehrig S.M."/>
            <person name="Godfrey S.A.C."/>
            <person name="Knight C.G."/>
            <person name="Malone J.G."/>
            <person name="Robinson Z."/>
            <person name="Spiers A.J."/>
            <person name="Harris S."/>
            <person name="Challis G.L."/>
            <person name="Yaxley A.M."/>
            <person name="Harris D."/>
            <person name="Seeger K."/>
            <person name="Murphy L."/>
            <person name="Rutter S."/>
            <person name="Squares R."/>
            <person name="Quail M.A."/>
            <person name="Saunders E."/>
            <person name="Mavromatis K."/>
            <person name="Brettin T.S."/>
            <person name="Bentley S.D."/>
            <person name="Hothersall J."/>
            <person name="Stephens E."/>
            <person name="Thomas C.M."/>
            <person name="Parkhill J."/>
            <person name="Levy S.B."/>
            <person name="Rainey P.B."/>
            <person name="Thomson N.R."/>
        </authorList>
    </citation>
    <scope>NUCLEOTIDE SEQUENCE [LARGE SCALE GENOMIC DNA]</scope>
    <source>
        <strain>SBW25</strain>
    </source>
</reference>
<sequence length="554" mass="61423">MAYYRTPHDVTALPAWQALNQHRQAMQDFSMREAFNADPQRFSQFTLSSCGLFLDYSKNLITSETRDLLVGLAKEVGLKDAINSLYAGEPVNSSEGRPALHTALRRPVGDKLSVNGVNIMPDVHKVLNQITDLVGRIHDGLWRGYTEKPITDVVNIGIGGSFLGPELVSEALLSYAHKGVRCHYLANIDGSEFHELTMKLRAETTLFIVSSKSFNTLETLKNAQAARAWYLAQGGSEAELYRHFIAVSSNNAAAVAFGIREENIFPMWDWVGGRYSLWSAIGLPIALAIGMSNFKELLSGAYTMDQHFQNAPFEANMPVLLGLLGVWYGNFWGAQSHAILPYDHYLRNITKHLQQLDMESNGKSVRQDGTPVATDTGPVIWGGVGCNGQHAYHQLLHQGTQLIPADFIVPIVSFNPVSDHHQWLYANCLSQSQALMLGKTRVEAEAELRDKGIPEDEVQKLAPHKVIPGNRPSNTLVVERISPRRLGALVAMYEHKVFVQSVIWGINAFDQWGVELGKELGKGVYNRLTGAEETSAEDASTQGLINYFRGRHRG</sequence>
<feature type="chain" id="PRO_1000206370" description="Glucose-6-phosphate isomerase">
    <location>
        <begin position="1"/>
        <end position="554"/>
    </location>
</feature>
<feature type="active site" description="Proton donor" evidence="1">
    <location>
        <position position="359"/>
    </location>
</feature>
<feature type="active site" evidence="1">
    <location>
        <position position="390"/>
    </location>
</feature>
<feature type="active site" evidence="1">
    <location>
        <position position="518"/>
    </location>
</feature>
<gene>
    <name evidence="1" type="primary">pgi</name>
    <name type="ordered locus">PFLU_5243</name>
</gene>